<gene>
    <name type="primary">Fzd6</name>
</gene>
<proteinExistence type="evidence at protein level"/>
<comment type="function">
    <text evidence="1 6">Receptor for Wnt proteins. Most of frizzled receptors are coupled to the beta-catenin canonical signaling pathway, which leads to the activation of disheveled proteins, inhibition of GSK-3 kinase, nuclear accumulation of beta-catenin and activation of Wnt target genes. A second signaling pathway involving PKC and calcium fluxes has been seen for some family members, but it is not yet clear if it represents a distinct pathway or if it can be integrated in the canonical pathway, as PKC seems to be required for Wnt-mediated inactivation of GSK-3 kinase. Both pathways seem to involve interactions with G-proteins. Activation by Wnt5A stimulates PKC activity via a G-protein-dependent mechanism. Involved in transduction and intercellular transmission of polarity information during tissue morphogenesis and/or in differentiated tissues (By similarity). Together with FZD3, is involved in the neural tube closure and plays a role in the regulation of the establishment of planar cell polarity (PCP), particularly in the orientation of asymmetric bundles of stereocilia on the apical faces of a subset of auditory and vestibular sensory cells located in the inner ear.</text>
</comment>
<comment type="subunit">
    <text evidence="8">Interacts with LMBR1L.</text>
</comment>
<comment type="subcellular location">
    <subcellularLocation>
        <location evidence="5">Membrane</location>
        <topology evidence="2">Multi-pass membrane protein</topology>
    </subcellularLocation>
    <subcellularLocation>
        <location evidence="5">Cell membrane</location>
        <topology evidence="2">Multi-pass membrane protein</topology>
    </subcellularLocation>
    <subcellularLocation>
        <location evidence="6">Cell surface</location>
    </subcellularLocation>
    <subcellularLocation>
        <location evidence="6">Apical cell membrane</location>
        <topology evidence="2">Multi-pass membrane protein</topology>
    </subcellularLocation>
    <subcellularLocation>
        <location evidence="6">Cytoplasmic vesicle membrane</location>
        <topology evidence="2">Multi-pass membrane protein</topology>
    </subcellularLocation>
    <subcellularLocation>
        <location evidence="8">Endoplasmic reticulum membrane</location>
        <topology evidence="2">Multi-pass membrane protein</topology>
    </subcellularLocation>
    <text evidence="6 8">Colocalizes with FZD3 at the apical face of cells (PubMed:16495441). Localizes to the endoplasmic reticulum membrane in the presence of LMBR1L (PubMed:31073040).</text>
</comment>
<comment type="tissue specificity">
    <text evidence="6">Expressed in both hair cells and supporting cells in the utricle, saccule, cristae and the organ of Corti in the inner ear (at protein level).</text>
</comment>
<comment type="domain">
    <text evidence="1">Lys-Thr-X-X-X-Trp motif interacts with the PDZ domain of Dvl (Disheveled) family members and is involved in the activation of the Wnt/beta-catenin signaling pathway.</text>
</comment>
<comment type="domain">
    <text evidence="1">The FZ domain is involved in binding with Wnt ligands.</text>
</comment>
<comment type="PTM">
    <text evidence="1">Ubiquitinated by ZNRF3, leading to its degradation by the proteasome.</text>
</comment>
<comment type="disruption phenotype">
    <text evidence="6 7">Half of the males without the gene, but not females, display abnormal claw morphology or absent claws compared to wild-type; at the age of 2 to 3 months, the claws disappear or become rudimentary on the hind limbs (PubMed:21665003). FZD3 and FZD6 double knockout embryos have a curled tail, exhibit defects in neural tube and eyelids closure, in the orientation of hair bundles on inner-ear sensory cells and die at birth (PubMed:16495441).</text>
</comment>
<comment type="similarity">
    <text evidence="9">Belongs to the G-protein coupled receptor Fz/Smo family.</text>
</comment>
<name>FZD6_MOUSE</name>
<feature type="signal peptide" evidence="2">
    <location>
        <begin position="1"/>
        <end position="18"/>
    </location>
</feature>
<feature type="chain" id="PRO_0000012995" description="Frizzled-6">
    <location>
        <begin position="19"/>
        <end position="709"/>
    </location>
</feature>
<feature type="topological domain" description="Extracellular" evidence="2">
    <location>
        <begin position="19"/>
        <end position="201"/>
    </location>
</feature>
<feature type="transmembrane region" description="Helical; Name=1" evidence="2">
    <location>
        <begin position="202"/>
        <end position="222"/>
    </location>
</feature>
<feature type="topological domain" description="Cytoplasmic" evidence="2">
    <location>
        <begin position="223"/>
        <end position="233"/>
    </location>
</feature>
<feature type="transmembrane region" description="Helical; Name=2" evidence="2">
    <location>
        <begin position="234"/>
        <end position="254"/>
    </location>
</feature>
<feature type="topological domain" description="Extracellular" evidence="2">
    <location>
        <begin position="255"/>
        <end position="284"/>
    </location>
</feature>
<feature type="transmembrane region" description="Helical; Name=3" evidence="2">
    <location>
        <begin position="285"/>
        <end position="305"/>
    </location>
</feature>
<feature type="topological domain" description="Cytoplasmic" evidence="2">
    <location>
        <begin position="306"/>
        <end position="324"/>
    </location>
</feature>
<feature type="transmembrane region" description="Helical; Name=4" evidence="2">
    <location>
        <begin position="325"/>
        <end position="345"/>
    </location>
</feature>
<feature type="topological domain" description="Extracellular" evidence="2">
    <location>
        <begin position="346"/>
        <end position="370"/>
    </location>
</feature>
<feature type="transmembrane region" description="Helical; Name=5" evidence="2">
    <location>
        <begin position="371"/>
        <end position="391"/>
    </location>
</feature>
<feature type="topological domain" description="Cytoplasmic" evidence="2">
    <location>
        <begin position="392"/>
        <end position="416"/>
    </location>
</feature>
<feature type="transmembrane region" description="Helical; Name=6" evidence="2">
    <location>
        <begin position="417"/>
        <end position="437"/>
    </location>
</feature>
<feature type="topological domain" description="Extracellular" evidence="2">
    <location>
        <begin position="438"/>
        <end position="473"/>
    </location>
</feature>
<feature type="transmembrane region" description="Helical; Name=7" evidence="2">
    <location>
        <begin position="474"/>
        <end position="494"/>
    </location>
</feature>
<feature type="topological domain" description="Cytoplasmic" evidence="2">
    <location>
        <begin position="495"/>
        <end position="709"/>
    </location>
</feature>
<feature type="domain" description="FZ" evidence="3">
    <location>
        <begin position="19"/>
        <end position="132"/>
    </location>
</feature>
<feature type="region of interest" description="Disordered" evidence="4">
    <location>
        <begin position="583"/>
        <end position="709"/>
    </location>
</feature>
<feature type="short sequence motif" description="Lys-Thr-X-X-X-Trp motif, mediates interaction with the PDZ domain of Dvl family members" evidence="1">
    <location>
        <begin position="498"/>
        <end position="503"/>
    </location>
</feature>
<feature type="compositionally biased region" description="Polar residues" evidence="4">
    <location>
        <begin position="583"/>
        <end position="594"/>
    </location>
</feature>
<feature type="compositionally biased region" description="Basic and acidic residues" evidence="4">
    <location>
        <begin position="596"/>
        <end position="616"/>
    </location>
</feature>
<feature type="compositionally biased region" description="Polar residues" evidence="4">
    <location>
        <begin position="620"/>
        <end position="629"/>
    </location>
</feature>
<feature type="compositionally biased region" description="Basic and acidic residues" evidence="4">
    <location>
        <begin position="630"/>
        <end position="644"/>
    </location>
</feature>
<feature type="compositionally biased region" description="Polar residues" evidence="4">
    <location>
        <begin position="669"/>
        <end position="690"/>
    </location>
</feature>
<feature type="compositionally biased region" description="Basic and acidic residues" evidence="4">
    <location>
        <begin position="697"/>
        <end position="709"/>
    </location>
</feature>
<feature type="modified residue" description="Phosphoserine" evidence="10">
    <location>
        <position position="656"/>
    </location>
</feature>
<feature type="glycosylation site" description="N-linked (GlcNAc...) asparagine" evidence="2">
    <location>
        <position position="38"/>
    </location>
</feature>
<feature type="glycosylation site" description="N-linked (GlcNAc...) asparagine" evidence="2">
    <location>
        <position position="256"/>
    </location>
</feature>
<feature type="glycosylation site" description="N-linked (GlcNAc...) asparagine" evidence="2">
    <location>
        <position position="352"/>
    </location>
</feature>
<feature type="disulfide bond" evidence="3">
    <location>
        <begin position="24"/>
        <end position="85"/>
    </location>
</feature>
<feature type="disulfide bond" evidence="3">
    <location>
        <begin position="32"/>
        <end position="78"/>
    </location>
</feature>
<feature type="disulfide bond" evidence="3">
    <location>
        <begin position="69"/>
        <end position="106"/>
    </location>
</feature>
<feature type="disulfide bond" evidence="3">
    <location>
        <begin position="95"/>
        <end position="129"/>
    </location>
</feature>
<feature type="disulfide bond" evidence="3">
    <location>
        <begin position="99"/>
        <end position="123"/>
    </location>
</feature>
<reference key="1">
    <citation type="journal article" date="1996" name="J. Biol. Chem.">
        <title>A large family of putative transmembrane receptors homologous to the product of the Drosophila tissue polarity gene frizzled.</title>
        <authorList>
            <person name="Wang Y."/>
            <person name="Macke J.P."/>
            <person name="Abella B.S."/>
            <person name="Andreasson K."/>
            <person name="Worley P."/>
            <person name="Gilbert D.J."/>
            <person name="Copeland N.G."/>
            <person name="Jenkins N.A."/>
            <person name="Nathans J."/>
        </authorList>
    </citation>
    <scope>NUCLEOTIDE SEQUENCE [MRNA]</scope>
</reference>
<reference key="2">
    <citation type="journal article" date="1999" name="Curr. Biol.">
        <title>Protein kinase C is differentially stimulated by Wnt and Frizzled homologs in a G-protein-dependent manner.</title>
        <authorList>
            <person name="Sheldahl L.C."/>
            <person name="Park M."/>
            <person name="Malbon C.C."/>
            <person name="Moon R.T."/>
        </authorList>
    </citation>
    <scope>WNT-MEDIATED PKC ACTIVATION</scope>
</reference>
<reference key="3">
    <citation type="journal article" date="1999" name="Proc. Natl. Acad. Sci. U.S.A.">
        <title>Biochemical characterization of Wnt-frizzled interactions using a soluble, biologically active vertebrate Wnt protein.</title>
        <authorList>
            <person name="Hsieh J.C."/>
            <person name="Rattner A."/>
            <person name="Smallwood P.M."/>
            <person name="Nathans J."/>
        </authorList>
    </citation>
    <scope>SUBCELLULAR LOCATION</scope>
</reference>
<reference key="4">
    <citation type="journal article" date="2010" name="Cell">
        <title>A tissue-specific atlas of mouse protein phosphorylation and expression.</title>
        <authorList>
            <person name="Huttlin E.L."/>
            <person name="Jedrychowski M.P."/>
            <person name="Elias J.E."/>
            <person name="Goswami T."/>
            <person name="Rad R."/>
            <person name="Beausoleil S.A."/>
            <person name="Villen J."/>
            <person name="Haas W."/>
            <person name="Sowa M.E."/>
            <person name="Gygi S.P."/>
        </authorList>
    </citation>
    <scope>PHOSPHORYLATION [LARGE SCALE ANALYSIS] AT SER-656</scope>
    <scope>IDENTIFICATION BY MASS SPECTROMETRY [LARGE SCALE ANALYSIS]</scope>
    <source>
        <tissue>Kidney</tissue>
    </source>
</reference>
<reference key="5">
    <citation type="journal article" date="2011" name="Am. J. Hum. Genet.">
        <title>Mutations in Frizzled 6 cause isolated autosomal-recessive nail dysplasia.</title>
        <authorList>
            <person name="Frojmark A.S."/>
            <person name="Schuster J."/>
            <person name="Sobol M."/>
            <person name="Entesarian M."/>
            <person name="Kilander M.B."/>
            <person name="Gabrikova D."/>
            <person name="Nawaz S."/>
            <person name="Baig S.M."/>
            <person name="Schulte G."/>
            <person name="Klar J."/>
            <person name="Dahl N."/>
        </authorList>
    </citation>
    <scope>DISRUPTION PHENOTYPE</scope>
</reference>
<reference key="6">
    <citation type="journal article" date="2006" name="J. Neurosci.">
        <title>The role of Frizzled3 and Frizzled6 in neural tube closure and in the planar polarity of inner-ear sensory hair cells.</title>
        <authorList>
            <person name="Wang Y."/>
            <person name="Guo N."/>
            <person name="Nathans J."/>
        </authorList>
    </citation>
    <scope>FUNCTION</scope>
    <scope>DISRUPTION PHENOTYPE</scope>
    <scope>SUBCELLULAR LOCATION</scope>
    <scope>TISSUE SPECIFICITY</scope>
</reference>
<reference key="7">
    <citation type="journal article" date="2019" name="Science">
        <title>LMBR1L regulates lymphopoiesis through Wnt/beta-catenin signaling.</title>
        <authorList>
            <person name="Choi J.H."/>
            <person name="Zhong X."/>
            <person name="McAlpine W."/>
            <person name="Liao T.C."/>
            <person name="Zhang D."/>
            <person name="Fang B."/>
            <person name="Russell J."/>
            <person name="Ludwig S."/>
            <person name="Nair-Gill E."/>
            <person name="Zhang Z."/>
            <person name="Wang K.W."/>
            <person name="Misawa T."/>
            <person name="Zhan X."/>
            <person name="Choi M."/>
            <person name="Wang T."/>
            <person name="Li X."/>
            <person name="Tang M."/>
            <person name="Sun Q."/>
            <person name="Yu L."/>
            <person name="Murray A.R."/>
            <person name="Moresco E.M.Y."/>
            <person name="Beutler B."/>
        </authorList>
    </citation>
    <scope>INTERACTION WITH LMBR1L</scope>
    <scope>SUBCELLULAR LOCATION</scope>
</reference>
<protein>
    <recommendedName>
        <fullName>Frizzled-6</fullName>
        <shortName>Fz-6</shortName>
        <shortName>mFz6</shortName>
    </recommendedName>
</protein>
<organism>
    <name type="scientific">Mus musculus</name>
    <name type="common">Mouse</name>
    <dbReference type="NCBI Taxonomy" id="10090"/>
    <lineage>
        <taxon>Eukaryota</taxon>
        <taxon>Metazoa</taxon>
        <taxon>Chordata</taxon>
        <taxon>Craniata</taxon>
        <taxon>Vertebrata</taxon>
        <taxon>Euteleostomi</taxon>
        <taxon>Mammalia</taxon>
        <taxon>Eutheria</taxon>
        <taxon>Euarchontoglires</taxon>
        <taxon>Glires</taxon>
        <taxon>Rodentia</taxon>
        <taxon>Myomorpha</taxon>
        <taxon>Muroidea</taxon>
        <taxon>Muridae</taxon>
        <taxon>Murinae</taxon>
        <taxon>Mus</taxon>
        <taxon>Mus</taxon>
    </lineage>
</organism>
<dbReference type="EMBL" id="U43319">
    <property type="protein sequence ID" value="AAC52431.1"/>
    <property type="molecule type" value="mRNA"/>
</dbReference>
<dbReference type="CCDS" id="CCDS27441.1"/>
<dbReference type="RefSeq" id="NP_001155966.1">
    <property type="nucleotide sequence ID" value="NM_001162494.1"/>
</dbReference>
<dbReference type="RefSeq" id="NP_001398155.1">
    <property type="nucleotide sequence ID" value="NM_001411226.1"/>
</dbReference>
<dbReference type="RefSeq" id="NP_032082.3">
    <property type="nucleotide sequence ID" value="NM_008056.3"/>
</dbReference>
<dbReference type="RefSeq" id="XP_017171919.1">
    <property type="nucleotide sequence ID" value="XM_017316430.1"/>
</dbReference>
<dbReference type="RefSeq" id="XP_036015049.1">
    <property type="nucleotide sequence ID" value="XM_036159156.1"/>
</dbReference>
<dbReference type="SMR" id="Q61089"/>
<dbReference type="BioGRID" id="199779">
    <property type="interactions" value="3"/>
</dbReference>
<dbReference type="FunCoup" id="Q61089">
    <property type="interactions" value="738"/>
</dbReference>
<dbReference type="IntAct" id="Q61089">
    <property type="interactions" value="1"/>
</dbReference>
<dbReference type="STRING" id="10090.ENSMUSP00000136328"/>
<dbReference type="GlyCosmos" id="Q61089">
    <property type="glycosylation" value="3 sites, No reported glycans"/>
</dbReference>
<dbReference type="GlyGen" id="Q61089">
    <property type="glycosylation" value="3 sites"/>
</dbReference>
<dbReference type="iPTMnet" id="Q61089"/>
<dbReference type="PhosphoSitePlus" id="Q61089"/>
<dbReference type="PaxDb" id="10090-ENSMUSP00000022906"/>
<dbReference type="ProteomicsDB" id="272927"/>
<dbReference type="Antibodypedia" id="2906">
    <property type="antibodies" value="347 antibodies from 37 providers"/>
</dbReference>
<dbReference type="DNASU" id="14368"/>
<dbReference type="Ensembl" id="ENSMUST00000022906.8">
    <property type="protein sequence ID" value="ENSMUSP00000022906.8"/>
    <property type="gene ID" value="ENSMUSG00000022297.16"/>
</dbReference>
<dbReference type="Ensembl" id="ENSMUST00000179165.9">
    <property type="protein sequence ID" value="ENSMUSP00000136328.2"/>
    <property type="gene ID" value="ENSMUSG00000022297.16"/>
</dbReference>
<dbReference type="GeneID" id="14368"/>
<dbReference type="KEGG" id="mmu:14368"/>
<dbReference type="UCSC" id="uc007vny.2">
    <property type="organism name" value="mouse"/>
</dbReference>
<dbReference type="AGR" id="MGI:108474"/>
<dbReference type="CTD" id="8323"/>
<dbReference type="MGI" id="MGI:108474">
    <property type="gene designation" value="Fzd6"/>
</dbReference>
<dbReference type="VEuPathDB" id="HostDB:ENSMUSG00000022297"/>
<dbReference type="eggNOG" id="KOG3577">
    <property type="taxonomic scope" value="Eukaryota"/>
</dbReference>
<dbReference type="GeneTree" id="ENSGT00940000158485"/>
<dbReference type="HOGENOM" id="CLU_007873_4_0_1"/>
<dbReference type="InParanoid" id="Q61089"/>
<dbReference type="OMA" id="FLKHNNR"/>
<dbReference type="OrthoDB" id="10053709at2759"/>
<dbReference type="PhylomeDB" id="Q61089"/>
<dbReference type="TreeFam" id="TF317907"/>
<dbReference type="Reactome" id="R-MMU-4086398">
    <property type="pathway name" value="Ca2+ pathway"/>
</dbReference>
<dbReference type="Reactome" id="R-MMU-4086400">
    <property type="pathway name" value="PCP/CE pathway"/>
</dbReference>
<dbReference type="Reactome" id="R-MMU-4641263">
    <property type="pathway name" value="Regulation of FZD by ubiquitination"/>
</dbReference>
<dbReference type="BioGRID-ORCS" id="14368">
    <property type="hits" value="2 hits in 77 CRISPR screens"/>
</dbReference>
<dbReference type="ChiTaRS" id="Fzd6">
    <property type="organism name" value="mouse"/>
</dbReference>
<dbReference type="PRO" id="PR:Q61089"/>
<dbReference type="Proteomes" id="UP000000589">
    <property type="component" value="Chromosome 15"/>
</dbReference>
<dbReference type="RNAct" id="Q61089">
    <property type="molecule type" value="protein"/>
</dbReference>
<dbReference type="Bgee" id="ENSMUSG00000022297">
    <property type="expression patterns" value="Expressed in lip and 144 other cell types or tissues"/>
</dbReference>
<dbReference type="ExpressionAtlas" id="Q61089">
    <property type="expression patterns" value="baseline and differential"/>
</dbReference>
<dbReference type="GO" id="GO:0045177">
    <property type="term" value="C:apical part of cell"/>
    <property type="evidence" value="ECO:0000314"/>
    <property type="project" value="MGI"/>
</dbReference>
<dbReference type="GO" id="GO:0016324">
    <property type="term" value="C:apical plasma membrane"/>
    <property type="evidence" value="ECO:0000314"/>
    <property type="project" value="MGI"/>
</dbReference>
<dbReference type="GO" id="GO:0016327">
    <property type="term" value="C:apicolateral plasma membrane"/>
    <property type="evidence" value="ECO:0000314"/>
    <property type="project" value="MGI"/>
</dbReference>
<dbReference type="GO" id="GO:0009986">
    <property type="term" value="C:cell surface"/>
    <property type="evidence" value="ECO:0007669"/>
    <property type="project" value="UniProtKB-SubCell"/>
</dbReference>
<dbReference type="GO" id="GO:0036064">
    <property type="term" value="C:ciliary basal body"/>
    <property type="evidence" value="ECO:0007669"/>
    <property type="project" value="Ensembl"/>
</dbReference>
<dbReference type="GO" id="GO:0030659">
    <property type="term" value="C:cytoplasmic vesicle membrane"/>
    <property type="evidence" value="ECO:0007669"/>
    <property type="project" value="UniProtKB-SubCell"/>
</dbReference>
<dbReference type="GO" id="GO:0005789">
    <property type="term" value="C:endoplasmic reticulum membrane"/>
    <property type="evidence" value="ECO:0000314"/>
    <property type="project" value="UniProtKB"/>
</dbReference>
<dbReference type="GO" id="GO:0005886">
    <property type="term" value="C:plasma membrane"/>
    <property type="evidence" value="ECO:0000314"/>
    <property type="project" value="UniProtKB"/>
</dbReference>
<dbReference type="GO" id="GO:0004930">
    <property type="term" value="F:G protein-coupled receptor activity"/>
    <property type="evidence" value="ECO:0007669"/>
    <property type="project" value="UniProtKB-KW"/>
</dbReference>
<dbReference type="GO" id="GO:0031625">
    <property type="term" value="F:ubiquitin protein ligase binding"/>
    <property type="evidence" value="ECO:0007669"/>
    <property type="project" value="Ensembl"/>
</dbReference>
<dbReference type="GO" id="GO:0042813">
    <property type="term" value="F:Wnt receptor activity"/>
    <property type="evidence" value="ECO:0007669"/>
    <property type="project" value="Ensembl"/>
</dbReference>
<dbReference type="GO" id="GO:0017147">
    <property type="term" value="F:Wnt-protein binding"/>
    <property type="evidence" value="ECO:0000353"/>
    <property type="project" value="BHF-UCL"/>
</dbReference>
<dbReference type="GO" id="GO:0033278">
    <property type="term" value="P:cell proliferation in midbrain"/>
    <property type="evidence" value="ECO:0000316"/>
    <property type="project" value="MGI"/>
</dbReference>
<dbReference type="GO" id="GO:0035880">
    <property type="term" value="P:embryonic nail plate morphogenesis"/>
    <property type="evidence" value="ECO:0000315"/>
    <property type="project" value="MGI"/>
</dbReference>
<dbReference type="GO" id="GO:0048105">
    <property type="term" value="P:establishment of body hair planar orientation"/>
    <property type="evidence" value="ECO:0000316"/>
    <property type="project" value="MGI"/>
</dbReference>
<dbReference type="GO" id="GO:0001736">
    <property type="term" value="P:establishment of planar polarity"/>
    <property type="evidence" value="ECO:0000316"/>
    <property type="project" value="MGI"/>
</dbReference>
<dbReference type="GO" id="GO:0001942">
    <property type="term" value="P:hair follicle development"/>
    <property type="evidence" value="ECO:0000315"/>
    <property type="project" value="MGI"/>
</dbReference>
<dbReference type="GO" id="GO:0042472">
    <property type="term" value="P:inner ear morphogenesis"/>
    <property type="evidence" value="ECO:0000316"/>
    <property type="project" value="MGI"/>
</dbReference>
<dbReference type="GO" id="GO:0030901">
    <property type="term" value="P:midbrain development"/>
    <property type="evidence" value="ECO:0000316"/>
    <property type="project" value="MGI"/>
</dbReference>
<dbReference type="GO" id="GO:0090090">
    <property type="term" value="P:negative regulation of canonical Wnt signaling pathway"/>
    <property type="evidence" value="ECO:0007669"/>
    <property type="project" value="Ensembl"/>
</dbReference>
<dbReference type="GO" id="GO:0000122">
    <property type="term" value="P:negative regulation of transcription by RNA polymerase II"/>
    <property type="evidence" value="ECO:0007669"/>
    <property type="project" value="Ensembl"/>
</dbReference>
<dbReference type="GO" id="GO:0001843">
    <property type="term" value="P:neural tube closure"/>
    <property type="evidence" value="ECO:0000316"/>
    <property type="project" value="MGI"/>
</dbReference>
<dbReference type="GO" id="GO:0030168">
    <property type="term" value="P:platelet activation"/>
    <property type="evidence" value="ECO:0000315"/>
    <property type="project" value="MGI"/>
</dbReference>
<dbReference type="GO" id="GO:0060071">
    <property type="term" value="P:Wnt signaling pathway, planar cell polarity pathway"/>
    <property type="evidence" value="ECO:0000314"/>
    <property type="project" value="MGI"/>
</dbReference>
<dbReference type="CDD" id="cd15032">
    <property type="entry name" value="7tmF_FZD6"/>
    <property type="match status" value="1"/>
</dbReference>
<dbReference type="CDD" id="cd07450">
    <property type="entry name" value="CRD_FZ6"/>
    <property type="match status" value="1"/>
</dbReference>
<dbReference type="FunFam" id="1.20.1070.10:FF:000036">
    <property type="entry name" value="frizzled-3 isoform X1"/>
    <property type="match status" value="1"/>
</dbReference>
<dbReference type="FunFam" id="1.10.2000.10:FF:000014">
    <property type="entry name" value="frizzled-6 isoform X1"/>
    <property type="match status" value="1"/>
</dbReference>
<dbReference type="Gene3D" id="1.10.2000.10">
    <property type="entry name" value="Frizzled cysteine-rich domain"/>
    <property type="match status" value="1"/>
</dbReference>
<dbReference type="Gene3D" id="1.20.1070.10">
    <property type="entry name" value="Rhodopsin 7-helix transmembrane proteins"/>
    <property type="match status" value="1"/>
</dbReference>
<dbReference type="InterPro" id="IPR015526">
    <property type="entry name" value="Frizzled/SFRP"/>
</dbReference>
<dbReference type="InterPro" id="IPR000539">
    <property type="entry name" value="Frizzled/Smoothened_7TM"/>
</dbReference>
<dbReference type="InterPro" id="IPR020067">
    <property type="entry name" value="Frizzled_dom"/>
</dbReference>
<dbReference type="InterPro" id="IPR036790">
    <property type="entry name" value="Frizzled_dom_sf"/>
</dbReference>
<dbReference type="InterPro" id="IPR041770">
    <property type="entry name" value="FZ6_CRD"/>
</dbReference>
<dbReference type="InterPro" id="IPR026543">
    <property type="entry name" value="FZD6_7TM"/>
</dbReference>
<dbReference type="InterPro" id="IPR017981">
    <property type="entry name" value="GPCR_2-like_7TM"/>
</dbReference>
<dbReference type="PANTHER" id="PTHR11309">
    <property type="entry name" value="FRIZZLED"/>
    <property type="match status" value="1"/>
</dbReference>
<dbReference type="PANTHER" id="PTHR11309:SF75">
    <property type="entry name" value="FRIZZLED-6"/>
    <property type="match status" value="1"/>
</dbReference>
<dbReference type="Pfam" id="PF01534">
    <property type="entry name" value="Frizzled"/>
    <property type="match status" value="1"/>
</dbReference>
<dbReference type="Pfam" id="PF01392">
    <property type="entry name" value="Fz"/>
    <property type="match status" value="1"/>
</dbReference>
<dbReference type="PRINTS" id="PR00489">
    <property type="entry name" value="FRIZZLED"/>
</dbReference>
<dbReference type="SMART" id="SM00063">
    <property type="entry name" value="FRI"/>
    <property type="match status" value="1"/>
</dbReference>
<dbReference type="SMART" id="SM01330">
    <property type="entry name" value="Frizzled"/>
    <property type="match status" value="1"/>
</dbReference>
<dbReference type="SUPFAM" id="SSF63501">
    <property type="entry name" value="Frizzled cysteine-rich domain"/>
    <property type="match status" value="1"/>
</dbReference>
<dbReference type="PROSITE" id="PS50038">
    <property type="entry name" value="FZ"/>
    <property type="match status" value="1"/>
</dbReference>
<dbReference type="PROSITE" id="PS50261">
    <property type="entry name" value="G_PROTEIN_RECEP_F2_4"/>
    <property type="match status" value="1"/>
</dbReference>
<accession>Q61089</accession>
<keyword id="KW-1003">Cell membrane</keyword>
<keyword id="KW-0968">Cytoplasmic vesicle</keyword>
<keyword id="KW-0217">Developmental protein</keyword>
<keyword id="KW-1015">Disulfide bond</keyword>
<keyword id="KW-0256">Endoplasmic reticulum</keyword>
<keyword id="KW-0297">G-protein coupled receptor</keyword>
<keyword id="KW-0325">Glycoprotein</keyword>
<keyword id="KW-0472">Membrane</keyword>
<keyword id="KW-0524">Neurogenesis</keyword>
<keyword id="KW-0597">Phosphoprotein</keyword>
<keyword id="KW-0675">Receptor</keyword>
<keyword id="KW-1185">Reference proteome</keyword>
<keyword id="KW-0732">Signal</keyword>
<keyword id="KW-0807">Transducer</keyword>
<keyword id="KW-0812">Transmembrane</keyword>
<keyword id="KW-1133">Transmembrane helix</keyword>
<keyword id="KW-0832">Ubl conjugation</keyword>
<keyword id="KW-0879">Wnt signaling pathway</keyword>
<sequence length="709" mass="79082">MERSPFLLACILLPLVRGHSLFTCEPITVPRCMKMTYNMTFFPNLMGHYDQGIAAVEMGHFLHLANLECSPNIEMFLCQAFIPTCTEQIHVVLPCRKLCEKIVSDCKKLMDTFGIRWPEELECNRLPHCDDTVPVTSHPHTELSGPQKKSDQVPRDIGFWCPKHLRTSGDQGYRFLGIEQCAPPCPNMYFKSDELDFAKSFIGIVSIFCLCATLFTFLTFLIDVRRFRYPERPIIYYSVCYSIVSLMYFVGFLLGNSTACNKADEKLELGDTVVLGSKNKACSVVFMFLYFFTMAGTVWWVILTITWFLAAGRKWSCEAIEQKAVWFHAVAWGAPGFLTVMLLAMNKVEGDNISGVCFVGLYDLDASRYFVLLPLCLCVFVGLSLLLAGIISLNHVRQVIQHDGRNQEKLKKFMIRIGVFSGLYLVPLVTLLGCYVYELVNRITWEMTWFSDHCHQYRIPCPYQANPKARPELALFMIKYLMTLIVGISAVFWVGSKKTCTEWAGFFKRNRKRDPISESRRVLQESCEFFLKHNSKVKHKKKHGAPGPHRLKVISKSMGTSTGATTNHGTSAMAIADHDYLGQETSTEVHTSPEASVKEGRADRANTPSAKDRDCGESAGPSSKLSGNRNGRESRAGGLKERSNGSEGAPSEGRVSPKSSVPETGLIDCSTSQAASSPEPTSLKGSTSLPVHSASRARKEQGAGSHSDA</sequence>
<evidence type="ECO:0000250" key="1"/>
<evidence type="ECO:0000255" key="2"/>
<evidence type="ECO:0000255" key="3">
    <source>
        <dbReference type="PROSITE-ProRule" id="PRU00090"/>
    </source>
</evidence>
<evidence type="ECO:0000256" key="4">
    <source>
        <dbReference type="SAM" id="MobiDB-lite"/>
    </source>
</evidence>
<evidence type="ECO:0000269" key="5">
    <source>
    </source>
</evidence>
<evidence type="ECO:0000269" key="6">
    <source>
    </source>
</evidence>
<evidence type="ECO:0000269" key="7">
    <source>
    </source>
</evidence>
<evidence type="ECO:0000269" key="8">
    <source>
    </source>
</evidence>
<evidence type="ECO:0000305" key="9"/>
<evidence type="ECO:0007744" key="10">
    <source>
    </source>
</evidence>